<proteinExistence type="inferred from homology"/>
<organism>
    <name type="scientific">Bacillus cereus (strain ATCC 14579 / DSM 31 / CCUG 7414 / JCM 2152 / NBRC 15305 / NCIMB 9373 / NCTC 2599 / NRRL B-3711)</name>
    <dbReference type="NCBI Taxonomy" id="226900"/>
    <lineage>
        <taxon>Bacteria</taxon>
        <taxon>Bacillati</taxon>
        <taxon>Bacillota</taxon>
        <taxon>Bacilli</taxon>
        <taxon>Bacillales</taxon>
        <taxon>Bacillaceae</taxon>
        <taxon>Bacillus</taxon>
        <taxon>Bacillus cereus group</taxon>
    </lineage>
</organism>
<protein>
    <recommendedName>
        <fullName evidence="1">UDP-N-acetylglucosamine 1-carboxyvinyltransferase 2</fullName>
        <ecNumber evidence="1">2.5.1.7</ecNumber>
    </recommendedName>
    <alternativeName>
        <fullName evidence="1">Enoylpyruvate transferase 2</fullName>
    </alternativeName>
    <alternativeName>
        <fullName evidence="1">UDP-N-acetylglucosamine enolpyruvyl transferase 2</fullName>
        <shortName evidence="1">EPT 2</shortName>
    </alternativeName>
</protein>
<accession>Q814T6</accession>
<gene>
    <name evidence="1" type="primary">murA2</name>
    <name type="ordered locus">BC_5334</name>
</gene>
<evidence type="ECO:0000255" key="1">
    <source>
        <dbReference type="HAMAP-Rule" id="MF_00111"/>
    </source>
</evidence>
<dbReference type="EC" id="2.5.1.7" evidence="1"/>
<dbReference type="EMBL" id="AE016877">
    <property type="protein sequence ID" value="AAP12197.1"/>
    <property type="molecule type" value="Genomic_DNA"/>
</dbReference>
<dbReference type="RefSeq" id="NP_834996.1">
    <property type="nucleotide sequence ID" value="NC_004722.1"/>
</dbReference>
<dbReference type="RefSeq" id="WP_000413268.1">
    <property type="nucleotide sequence ID" value="NC_004722.1"/>
</dbReference>
<dbReference type="SMR" id="Q814T6"/>
<dbReference type="STRING" id="226900.BC_5334"/>
<dbReference type="KEGG" id="bce:BC5334"/>
<dbReference type="PATRIC" id="fig|226900.8.peg.5508"/>
<dbReference type="HOGENOM" id="CLU_027387_0_0_9"/>
<dbReference type="OrthoDB" id="9803760at2"/>
<dbReference type="UniPathway" id="UPA00219"/>
<dbReference type="Proteomes" id="UP000001417">
    <property type="component" value="Chromosome"/>
</dbReference>
<dbReference type="GO" id="GO:0005737">
    <property type="term" value="C:cytoplasm"/>
    <property type="evidence" value="ECO:0007669"/>
    <property type="project" value="UniProtKB-SubCell"/>
</dbReference>
<dbReference type="GO" id="GO:0008760">
    <property type="term" value="F:UDP-N-acetylglucosamine 1-carboxyvinyltransferase activity"/>
    <property type="evidence" value="ECO:0007669"/>
    <property type="project" value="UniProtKB-UniRule"/>
</dbReference>
<dbReference type="GO" id="GO:0051301">
    <property type="term" value="P:cell division"/>
    <property type="evidence" value="ECO:0007669"/>
    <property type="project" value="UniProtKB-KW"/>
</dbReference>
<dbReference type="GO" id="GO:0071555">
    <property type="term" value="P:cell wall organization"/>
    <property type="evidence" value="ECO:0007669"/>
    <property type="project" value="UniProtKB-KW"/>
</dbReference>
<dbReference type="GO" id="GO:0009252">
    <property type="term" value="P:peptidoglycan biosynthetic process"/>
    <property type="evidence" value="ECO:0007669"/>
    <property type="project" value="UniProtKB-UniRule"/>
</dbReference>
<dbReference type="GO" id="GO:0008360">
    <property type="term" value="P:regulation of cell shape"/>
    <property type="evidence" value="ECO:0007669"/>
    <property type="project" value="UniProtKB-KW"/>
</dbReference>
<dbReference type="GO" id="GO:0019277">
    <property type="term" value="P:UDP-N-acetylgalactosamine biosynthetic process"/>
    <property type="evidence" value="ECO:0007669"/>
    <property type="project" value="InterPro"/>
</dbReference>
<dbReference type="CDD" id="cd01555">
    <property type="entry name" value="UdpNAET"/>
    <property type="match status" value="1"/>
</dbReference>
<dbReference type="FunFam" id="3.65.10.10:FF:000001">
    <property type="entry name" value="UDP-N-acetylglucosamine 1-carboxyvinyltransferase"/>
    <property type="match status" value="1"/>
</dbReference>
<dbReference type="Gene3D" id="3.65.10.10">
    <property type="entry name" value="Enolpyruvate transferase domain"/>
    <property type="match status" value="2"/>
</dbReference>
<dbReference type="HAMAP" id="MF_00111">
    <property type="entry name" value="MurA"/>
    <property type="match status" value="1"/>
</dbReference>
<dbReference type="InterPro" id="IPR001986">
    <property type="entry name" value="Enolpyruvate_Tfrase_dom"/>
</dbReference>
<dbReference type="InterPro" id="IPR036968">
    <property type="entry name" value="Enolpyruvate_Tfrase_sf"/>
</dbReference>
<dbReference type="InterPro" id="IPR050068">
    <property type="entry name" value="MurA_subfamily"/>
</dbReference>
<dbReference type="InterPro" id="IPR013792">
    <property type="entry name" value="RNA3'P_cycl/enolpyr_Trfase_a/b"/>
</dbReference>
<dbReference type="InterPro" id="IPR005750">
    <property type="entry name" value="UDP_GlcNAc_COvinyl_MurA"/>
</dbReference>
<dbReference type="NCBIfam" id="TIGR01072">
    <property type="entry name" value="murA"/>
    <property type="match status" value="1"/>
</dbReference>
<dbReference type="NCBIfam" id="NF006873">
    <property type="entry name" value="PRK09369.1"/>
    <property type="match status" value="1"/>
</dbReference>
<dbReference type="NCBIfam" id="NF009470">
    <property type="entry name" value="PRK12830.1"/>
    <property type="match status" value="1"/>
</dbReference>
<dbReference type="PANTHER" id="PTHR43783">
    <property type="entry name" value="UDP-N-ACETYLGLUCOSAMINE 1-CARBOXYVINYLTRANSFERASE"/>
    <property type="match status" value="1"/>
</dbReference>
<dbReference type="PANTHER" id="PTHR43783:SF2">
    <property type="entry name" value="UDP-N-ACETYLGLUCOSAMINE 1-CARBOXYVINYLTRANSFERASE 2"/>
    <property type="match status" value="1"/>
</dbReference>
<dbReference type="Pfam" id="PF00275">
    <property type="entry name" value="EPSP_synthase"/>
    <property type="match status" value="1"/>
</dbReference>
<dbReference type="SUPFAM" id="SSF55205">
    <property type="entry name" value="EPT/RTPC-like"/>
    <property type="match status" value="1"/>
</dbReference>
<reference key="1">
    <citation type="journal article" date="2003" name="Nature">
        <title>Genome sequence of Bacillus cereus and comparative analysis with Bacillus anthracis.</title>
        <authorList>
            <person name="Ivanova N."/>
            <person name="Sorokin A."/>
            <person name="Anderson I."/>
            <person name="Galleron N."/>
            <person name="Candelon B."/>
            <person name="Kapatral V."/>
            <person name="Bhattacharyya A."/>
            <person name="Reznik G."/>
            <person name="Mikhailova N."/>
            <person name="Lapidus A."/>
            <person name="Chu L."/>
            <person name="Mazur M."/>
            <person name="Goltsman E."/>
            <person name="Larsen N."/>
            <person name="D'Souza M."/>
            <person name="Walunas T."/>
            <person name="Grechkin Y."/>
            <person name="Pusch G."/>
            <person name="Haselkorn R."/>
            <person name="Fonstein M."/>
            <person name="Ehrlich S.D."/>
            <person name="Overbeek R."/>
            <person name="Kyrpides N.C."/>
        </authorList>
    </citation>
    <scope>NUCLEOTIDE SEQUENCE [LARGE SCALE GENOMIC DNA]</scope>
    <source>
        <strain>ATCC 14579 / DSM 31 / CCUG 7414 / JCM 2152 / NBRC 15305 / NCIMB 9373 / NCTC 2599 / NRRL B-3711</strain>
    </source>
</reference>
<keyword id="KW-0131">Cell cycle</keyword>
<keyword id="KW-0132">Cell division</keyword>
<keyword id="KW-0133">Cell shape</keyword>
<keyword id="KW-0961">Cell wall biogenesis/degradation</keyword>
<keyword id="KW-0963">Cytoplasm</keyword>
<keyword id="KW-0573">Peptidoglycan synthesis</keyword>
<keyword id="KW-0670">Pyruvate</keyword>
<keyword id="KW-1185">Reference proteome</keyword>
<keyword id="KW-0808">Transferase</keyword>
<name>MURA2_BACCR</name>
<feature type="chain" id="PRO_0000231156" description="UDP-N-acetylglucosamine 1-carboxyvinyltransferase 2">
    <location>
        <begin position="1"/>
        <end position="429"/>
    </location>
</feature>
<feature type="active site" description="Proton donor" evidence="1">
    <location>
        <position position="117"/>
    </location>
</feature>
<feature type="binding site" evidence="1">
    <location>
        <begin position="22"/>
        <end position="23"/>
    </location>
    <ligand>
        <name>phosphoenolpyruvate</name>
        <dbReference type="ChEBI" id="CHEBI:58702"/>
    </ligand>
</feature>
<feature type="binding site" evidence="1">
    <location>
        <position position="93"/>
    </location>
    <ligand>
        <name>UDP-N-acetyl-alpha-D-glucosamine</name>
        <dbReference type="ChEBI" id="CHEBI:57705"/>
    </ligand>
</feature>
<feature type="binding site" evidence="1">
    <location>
        <begin position="122"/>
        <end position="126"/>
    </location>
    <ligand>
        <name>UDP-N-acetyl-alpha-D-glucosamine</name>
        <dbReference type="ChEBI" id="CHEBI:57705"/>
    </ligand>
</feature>
<feature type="binding site" evidence="1">
    <location>
        <position position="305"/>
    </location>
    <ligand>
        <name>UDP-N-acetyl-alpha-D-glucosamine</name>
        <dbReference type="ChEBI" id="CHEBI:57705"/>
    </ligand>
</feature>
<feature type="binding site" evidence="1">
    <location>
        <position position="327"/>
    </location>
    <ligand>
        <name>UDP-N-acetyl-alpha-D-glucosamine</name>
        <dbReference type="ChEBI" id="CHEBI:57705"/>
    </ligand>
</feature>
<feature type="modified residue" description="2-(S-cysteinyl)pyruvic acid O-phosphothioketal" evidence="1">
    <location>
        <position position="117"/>
    </location>
</feature>
<comment type="function">
    <text evidence="1">Cell wall formation. Adds enolpyruvyl to UDP-N-acetylglucosamine.</text>
</comment>
<comment type="catalytic activity">
    <reaction evidence="1">
        <text>phosphoenolpyruvate + UDP-N-acetyl-alpha-D-glucosamine = UDP-N-acetyl-3-O-(1-carboxyvinyl)-alpha-D-glucosamine + phosphate</text>
        <dbReference type="Rhea" id="RHEA:18681"/>
        <dbReference type="ChEBI" id="CHEBI:43474"/>
        <dbReference type="ChEBI" id="CHEBI:57705"/>
        <dbReference type="ChEBI" id="CHEBI:58702"/>
        <dbReference type="ChEBI" id="CHEBI:68483"/>
        <dbReference type="EC" id="2.5.1.7"/>
    </reaction>
</comment>
<comment type="pathway">
    <text evidence="1">Cell wall biogenesis; peptidoglycan biosynthesis.</text>
</comment>
<comment type="subcellular location">
    <subcellularLocation>
        <location evidence="1">Cytoplasm</location>
    </subcellularLocation>
</comment>
<comment type="similarity">
    <text evidence="1">Belongs to the EPSP synthase family. MurA subfamily.</text>
</comment>
<sequence>MEKLLIEGGRALNGTIRVSGAKNSAVALIPTTILADTPVTIGGVPNISDVKMLGDLLEEIGGKVTYGQEEEMVVDPSNMVAMPLPNGKVKKLRASYYLMGAMLGRFKKAVIGLPGGCHLGPRPIDQHIKGFEALGAHVTNEQGAIYLRADELRGARIYLDVVSVGATINIMLAAVRAKGRTVIENAAKEPEIIDVATLLTSMGARIKGAGTDVIRIDGVDSLHGCHHTIIPDRIEAGTYMILGAASGGEVTVDNVIPQHLESVTAKLREAGVQVETNDDQITVNGNRKLKVVDIKTLVYPGFPTDLQQPFTTLLTKAHGTGVVTDTIYGARFKHIDELRRMNAQIKVEGRSAIVTGPVLLQGAKVKASDLRAGAALVIAGLMADGITEVTGLEHIDRGYENIVDKLKGLGANIWREQMTKQEIEEMKNA</sequence>